<feature type="signal peptide" evidence="2">
    <location>
        <begin position="1"/>
        <end position="25"/>
    </location>
</feature>
<feature type="chain" id="PRO_0000008755" description="Protein FAM3D">
    <location>
        <begin position="26"/>
        <end position="223"/>
    </location>
</feature>
<feature type="domain" description="GG-type lectin" evidence="3">
    <location>
        <begin position="62"/>
        <end position="221"/>
    </location>
</feature>
<feature type="glycosylation site" description="N-linked (GlcNAc...) asparagine" evidence="2">
    <location>
        <position position="106"/>
    </location>
</feature>
<feature type="disulfide bond" evidence="1">
    <location>
        <begin position="54"/>
        <end position="82"/>
    </location>
</feature>
<feature type="disulfide bond" evidence="1">
    <location>
        <begin position="60"/>
        <end position="217"/>
    </location>
</feature>
<gene>
    <name evidence="5" type="primary">Fam3d</name>
    <name evidence="5" type="synonym">Oit1</name>
</gene>
<accession>P97805</accession>
<accession>Q8R009</accession>
<accession>Q8R1F2</accession>
<protein>
    <recommendedName>
        <fullName>Protein FAM3D</fullName>
    </recommendedName>
    <alternativeName>
        <fullName>Oncoprotein-induced protein 1</fullName>
    </alternativeName>
    <alternativeName>
        <fullName>Protein EF-7</fullName>
    </alternativeName>
</protein>
<evidence type="ECO:0000250" key="1"/>
<evidence type="ECO:0000255" key="2"/>
<evidence type="ECO:0000255" key="3">
    <source>
        <dbReference type="PROSITE-ProRule" id="PRU01375"/>
    </source>
</evidence>
<evidence type="ECO:0000305" key="4"/>
<evidence type="ECO:0000312" key="5">
    <source>
        <dbReference type="MGI" id="MGI:1201784"/>
    </source>
</evidence>
<keyword id="KW-1015">Disulfide bond</keyword>
<keyword id="KW-0325">Glycoprotein</keyword>
<keyword id="KW-0430">Lectin</keyword>
<keyword id="KW-1185">Reference proteome</keyword>
<keyword id="KW-0964">Secreted</keyword>
<keyword id="KW-0732">Signal</keyword>
<dbReference type="EMBL" id="AK010206">
    <property type="protein sequence ID" value="BAC25286.1"/>
    <property type="molecule type" value="mRNA"/>
</dbReference>
<dbReference type="EMBL" id="BC024504">
    <property type="protein sequence ID" value="AAH24504.1"/>
    <property type="molecule type" value="mRNA"/>
</dbReference>
<dbReference type="EMBL" id="BC024532">
    <property type="protein sequence ID" value="AAH24532.1"/>
    <property type="molecule type" value="mRNA"/>
</dbReference>
<dbReference type="EMBL" id="BC024542">
    <property type="protein sequence ID" value="AAH24542.1"/>
    <property type="molecule type" value="mRNA"/>
</dbReference>
<dbReference type="EMBL" id="BC024636">
    <property type="protein sequence ID" value="AAH24636.1"/>
    <property type="molecule type" value="mRNA"/>
</dbReference>
<dbReference type="EMBL" id="BC034193">
    <property type="protein sequence ID" value="AAH34193.1"/>
    <property type="molecule type" value="mRNA"/>
</dbReference>
<dbReference type="EMBL" id="U72677">
    <property type="protein sequence ID" value="AAB51037.1"/>
    <property type="molecule type" value="mRNA"/>
</dbReference>
<dbReference type="CCDS" id="CCDS36802.1"/>
<dbReference type="RefSeq" id="NP_666162.1">
    <property type="nucleotide sequence ID" value="NM_146050.2"/>
</dbReference>
<dbReference type="RefSeq" id="XP_006518013.1">
    <property type="nucleotide sequence ID" value="XM_006517950.4"/>
</dbReference>
<dbReference type="RefSeq" id="XP_006518014.1">
    <property type="nucleotide sequence ID" value="XM_006517951.5"/>
</dbReference>
<dbReference type="RefSeq" id="XP_006518015.1">
    <property type="nucleotide sequence ID" value="XM_006517952.2"/>
</dbReference>
<dbReference type="RefSeq" id="XP_006518016.1">
    <property type="nucleotide sequence ID" value="XM_006517953.4"/>
</dbReference>
<dbReference type="RefSeq" id="XP_006518017.1">
    <property type="nucleotide sequence ID" value="XM_006517954.4"/>
</dbReference>
<dbReference type="RefSeq" id="XP_011243038.1">
    <property type="nucleotide sequence ID" value="XM_011244736.1"/>
</dbReference>
<dbReference type="SMR" id="P97805"/>
<dbReference type="BioGRID" id="201909">
    <property type="interactions" value="1"/>
</dbReference>
<dbReference type="FunCoup" id="P97805">
    <property type="interactions" value="323"/>
</dbReference>
<dbReference type="STRING" id="10090.ENSMUSP00000022269"/>
<dbReference type="GlyCosmos" id="P97805">
    <property type="glycosylation" value="1 site, No reported glycans"/>
</dbReference>
<dbReference type="GlyGen" id="P97805">
    <property type="glycosylation" value="1 site"/>
</dbReference>
<dbReference type="PhosphoSitePlus" id="P97805"/>
<dbReference type="PaxDb" id="10090-ENSMUSP00000022269"/>
<dbReference type="PeptideAtlas" id="P97805"/>
<dbReference type="ProteomicsDB" id="277037"/>
<dbReference type="Antibodypedia" id="31681">
    <property type="antibodies" value="178 antibodies from 28 providers"/>
</dbReference>
<dbReference type="DNASU" id="18300"/>
<dbReference type="Ensembl" id="ENSMUST00000022269.7">
    <property type="protein sequence ID" value="ENSMUSP00000022269.6"/>
    <property type="gene ID" value="ENSMUSG00000021749.7"/>
</dbReference>
<dbReference type="GeneID" id="18300"/>
<dbReference type="KEGG" id="mmu:18300"/>
<dbReference type="UCSC" id="uc007sfd.1">
    <property type="organism name" value="mouse"/>
</dbReference>
<dbReference type="AGR" id="MGI:1201784"/>
<dbReference type="CTD" id="131177"/>
<dbReference type="MGI" id="MGI:1201784">
    <property type="gene designation" value="Fam3d"/>
</dbReference>
<dbReference type="VEuPathDB" id="HostDB:ENSMUSG00000021749"/>
<dbReference type="eggNOG" id="ENOG502RCCI">
    <property type="taxonomic scope" value="Eukaryota"/>
</dbReference>
<dbReference type="GeneTree" id="ENSGT00950000183004"/>
<dbReference type="HOGENOM" id="CLU_099478_0_1_1"/>
<dbReference type="InParanoid" id="P97805"/>
<dbReference type="OMA" id="MCFENQI"/>
<dbReference type="OrthoDB" id="440755at2759"/>
<dbReference type="PhylomeDB" id="P97805"/>
<dbReference type="TreeFam" id="TF353414"/>
<dbReference type="BioGRID-ORCS" id="18300">
    <property type="hits" value="1 hit in 78 CRISPR screens"/>
</dbReference>
<dbReference type="ChiTaRS" id="Oit1">
    <property type="organism name" value="mouse"/>
</dbReference>
<dbReference type="PRO" id="PR:P97805"/>
<dbReference type="Proteomes" id="UP000000589">
    <property type="component" value="Chromosome 14"/>
</dbReference>
<dbReference type="RNAct" id="P97805">
    <property type="molecule type" value="protein"/>
</dbReference>
<dbReference type="Bgee" id="ENSMUSG00000021749">
    <property type="expression patterns" value="Expressed in left colon and 68 other cell types or tissues"/>
</dbReference>
<dbReference type="ExpressionAtlas" id="P97805">
    <property type="expression patterns" value="baseline and differential"/>
</dbReference>
<dbReference type="GO" id="GO:0005615">
    <property type="term" value="C:extracellular space"/>
    <property type="evidence" value="ECO:0000314"/>
    <property type="project" value="MGI"/>
</dbReference>
<dbReference type="GO" id="GO:0030246">
    <property type="term" value="F:carbohydrate binding"/>
    <property type="evidence" value="ECO:0007669"/>
    <property type="project" value="UniProtKB-KW"/>
</dbReference>
<dbReference type="GO" id="GO:0035904">
    <property type="term" value="P:aorta development"/>
    <property type="evidence" value="ECO:0000315"/>
    <property type="project" value="MGI"/>
</dbReference>
<dbReference type="GO" id="GO:0046676">
    <property type="term" value="P:negative regulation of insulin secretion"/>
    <property type="evidence" value="ECO:0000250"/>
    <property type="project" value="UniProtKB"/>
</dbReference>
<dbReference type="GO" id="GO:0001780">
    <property type="term" value="P:neutrophil homeostasis"/>
    <property type="evidence" value="ECO:0000315"/>
    <property type="project" value="MGI"/>
</dbReference>
<dbReference type="GO" id="GO:1990266">
    <property type="term" value="P:neutrophil migration"/>
    <property type="evidence" value="ECO:0000315"/>
    <property type="project" value="MGI"/>
</dbReference>
<dbReference type="GO" id="GO:0002618">
    <property type="term" value="P:positive regulation of macrophage antigen processing and presentation"/>
    <property type="evidence" value="ECO:0000315"/>
    <property type="project" value="MGI"/>
</dbReference>
<dbReference type="GO" id="GO:0007165">
    <property type="term" value="P:signal transduction"/>
    <property type="evidence" value="ECO:0000315"/>
    <property type="project" value="MGI"/>
</dbReference>
<dbReference type="CDD" id="cd13940">
    <property type="entry name" value="ILEI_FAM3C"/>
    <property type="match status" value="1"/>
</dbReference>
<dbReference type="InterPro" id="IPR039220">
    <property type="entry name" value="FAM3"/>
</dbReference>
<dbReference type="InterPro" id="IPR039477">
    <property type="entry name" value="ILEI/PANDER_dom"/>
</dbReference>
<dbReference type="InterPro" id="IPR039475">
    <property type="entry name" value="ILEI_FAM3C"/>
</dbReference>
<dbReference type="PANTHER" id="PTHR14592">
    <property type="entry name" value="UNCHARACTERIZED FAM3"/>
    <property type="match status" value="1"/>
</dbReference>
<dbReference type="Pfam" id="PF15711">
    <property type="entry name" value="ILEI"/>
    <property type="match status" value="1"/>
</dbReference>
<dbReference type="PROSITE" id="PS52031">
    <property type="entry name" value="GG_LECTIN"/>
    <property type="match status" value="1"/>
</dbReference>
<reference key="1">
    <citation type="journal article" date="2005" name="Science">
        <title>The transcriptional landscape of the mammalian genome.</title>
        <authorList>
            <person name="Carninci P."/>
            <person name="Kasukawa T."/>
            <person name="Katayama S."/>
            <person name="Gough J."/>
            <person name="Frith M.C."/>
            <person name="Maeda N."/>
            <person name="Oyama R."/>
            <person name="Ravasi T."/>
            <person name="Lenhard B."/>
            <person name="Wells C."/>
            <person name="Kodzius R."/>
            <person name="Shimokawa K."/>
            <person name="Bajic V.B."/>
            <person name="Brenner S.E."/>
            <person name="Batalov S."/>
            <person name="Forrest A.R."/>
            <person name="Zavolan M."/>
            <person name="Davis M.J."/>
            <person name="Wilming L.G."/>
            <person name="Aidinis V."/>
            <person name="Allen J.E."/>
            <person name="Ambesi-Impiombato A."/>
            <person name="Apweiler R."/>
            <person name="Aturaliya R.N."/>
            <person name="Bailey T.L."/>
            <person name="Bansal M."/>
            <person name="Baxter L."/>
            <person name="Beisel K.W."/>
            <person name="Bersano T."/>
            <person name="Bono H."/>
            <person name="Chalk A.M."/>
            <person name="Chiu K.P."/>
            <person name="Choudhary V."/>
            <person name="Christoffels A."/>
            <person name="Clutterbuck D.R."/>
            <person name="Crowe M.L."/>
            <person name="Dalla E."/>
            <person name="Dalrymple B.P."/>
            <person name="de Bono B."/>
            <person name="Della Gatta G."/>
            <person name="di Bernardo D."/>
            <person name="Down T."/>
            <person name="Engstrom P."/>
            <person name="Fagiolini M."/>
            <person name="Faulkner G."/>
            <person name="Fletcher C.F."/>
            <person name="Fukushima T."/>
            <person name="Furuno M."/>
            <person name="Futaki S."/>
            <person name="Gariboldi M."/>
            <person name="Georgii-Hemming P."/>
            <person name="Gingeras T.R."/>
            <person name="Gojobori T."/>
            <person name="Green R.E."/>
            <person name="Gustincich S."/>
            <person name="Harbers M."/>
            <person name="Hayashi Y."/>
            <person name="Hensch T.K."/>
            <person name="Hirokawa N."/>
            <person name="Hill D."/>
            <person name="Huminiecki L."/>
            <person name="Iacono M."/>
            <person name="Ikeo K."/>
            <person name="Iwama A."/>
            <person name="Ishikawa T."/>
            <person name="Jakt M."/>
            <person name="Kanapin A."/>
            <person name="Katoh M."/>
            <person name="Kawasawa Y."/>
            <person name="Kelso J."/>
            <person name="Kitamura H."/>
            <person name="Kitano H."/>
            <person name="Kollias G."/>
            <person name="Krishnan S.P."/>
            <person name="Kruger A."/>
            <person name="Kummerfeld S.K."/>
            <person name="Kurochkin I.V."/>
            <person name="Lareau L.F."/>
            <person name="Lazarevic D."/>
            <person name="Lipovich L."/>
            <person name="Liu J."/>
            <person name="Liuni S."/>
            <person name="McWilliam S."/>
            <person name="Madan Babu M."/>
            <person name="Madera M."/>
            <person name="Marchionni L."/>
            <person name="Matsuda H."/>
            <person name="Matsuzawa S."/>
            <person name="Miki H."/>
            <person name="Mignone F."/>
            <person name="Miyake S."/>
            <person name="Morris K."/>
            <person name="Mottagui-Tabar S."/>
            <person name="Mulder N."/>
            <person name="Nakano N."/>
            <person name="Nakauchi H."/>
            <person name="Ng P."/>
            <person name="Nilsson R."/>
            <person name="Nishiguchi S."/>
            <person name="Nishikawa S."/>
            <person name="Nori F."/>
            <person name="Ohara O."/>
            <person name="Okazaki Y."/>
            <person name="Orlando V."/>
            <person name="Pang K.C."/>
            <person name="Pavan W.J."/>
            <person name="Pavesi G."/>
            <person name="Pesole G."/>
            <person name="Petrovsky N."/>
            <person name="Piazza S."/>
            <person name="Reed J."/>
            <person name="Reid J.F."/>
            <person name="Ring B.Z."/>
            <person name="Ringwald M."/>
            <person name="Rost B."/>
            <person name="Ruan Y."/>
            <person name="Salzberg S.L."/>
            <person name="Sandelin A."/>
            <person name="Schneider C."/>
            <person name="Schoenbach C."/>
            <person name="Sekiguchi K."/>
            <person name="Semple C.A."/>
            <person name="Seno S."/>
            <person name="Sessa L."/>
            <person name="Sheng Y."/>
            <person name="Shibata Y."/>
            <person name="Shimada H."/>
            <person name="Shimada K."/>
            <person name="Silva D."/>
            <person name="Sinclair B."/>
            <person name="Sperling S."/>
            <person name="Stupka E."/>
            <person name="Sugiura K."/>
            <person name="Sultana R."/>
            <person name="Takenaka Y."/>
            <person name="Taki K."/>
            <person name="Tammoja K."/>
            <person name="Tan S.L."/>
            <person name="Tang S."/>
            <person name="Taylor M.S."/>
            <person name="Tegner J."/>
            <person name="Teichmann S.A."/>
            <person name="Ueda H.R."/>
            <person name="van Nimwegen E."/>
            <person name="Verardo R."/>
            <person name="Wei C.L."/>
            <person name="Yagi K."/>
            <person name="Yamanishi H."/>
            <person name="Zabarovsky E."/>
            <person name="Zhu S."/>
            <person name="Zimmer A."/>
            <person name="Hide W."/>
            <person name="Bult C."/>
            <person name="Grimmond S.M."/>
            <person name="Teasdale R.D."/>
            <person name="Liu E.T."/>
            <person name="Brusic V."/>
            <person name="Quackenbush J."/>
            <person name="Wahlestedt C."/>
            <person name="Mattick J.S."/>
            <person name="Hume D.A."/>
            <person name="Kai C."/>
            <person name="Sasaki D."/>
            <person name="Tomaru Y."/>
            <person name="Fukuda S."/>
            <person name="Kanamori-Katayama M."/>
            <person name="Suzuki M."/>
            <person name="Aoki J."/>
            <person name="Arakawa T."/>
            <person name="Iida J."/>
            <person name="Imamura K."/>
            <person name="Itoh M."/>
            <person name="Kato T."/>
            <person name="Kawaji H."/>
            <person name="Kawagashira N."/>
            <person name="Kawashima T."/>
            <person name="Kojima M."/>
            <person name="Kondo S."/>
            <person name="Konno H."/>
            <person name="Nakano K."/>
            <person name="Ninomiya N."/>
            <person name="Nishio T."/>
            <person name="Okada M."/>
            <person name="Plessy C."/>
            <person name="Shibata K."/>
            <person name="Shiraki T."/>
            <person name="Suzuki S."/>
            <person name="Tagami M."/>
            <person name="Waki K."/>
            <person name="Watahiki A."/>
            <person name="Okamura-Oho Y."/>
            <person name="Suzuki H."/>
            <person name="Kawai J."/>
            <person name="Hayashizaki Y."/>
        </authorList>
    </citation>
    <scope>NUCLEOTIDE SEQUENCE [LARGE SCALE MRNA]</scope>
    <source>
        <strain>C57BL/6J</strain>
        <tissue>Tongue</tissue>
    </source>
</reference>
<reference key="2">
    <citation type="journal article" date="2004" name="Genome Res.">
        <title>The status, quality, and expansion of the NIH full-length cDNA project: the Mammalian Gene Collection (MGC).</title>
        <authorList>
            <consortium name="The MGC Project Team"/>
        </authorList>
    </citation>
    <scope>NUCLEOTIDE SEQUENCE [LARGE SCALE MRNA]</scope>
    <source>
        <tissue>Colon</tissue>
        <tissue>Salivary gland</tissue>
    </source>
</reference>
<reference key="3">
    <citation type="journal article" date="1997" name="Mol. Cell. Biol.">
        <title>E2a-Pbx1 induces aberrant expression of tissue-specific and developmentally regulated genes when expressed in NIH 3T3 fibroblasts.</title>
        <authorList>
            <person name="Fu X."/>
            <person name="Kamps M.P."/>
        </authorList>
    </citation>
    <scope>NUCLEOTIDE SEQUENCE [MRNA] OF 109-223</scope>
    <source>
        <strain>BALB/cJ</strain>
    </source>
</reference>
<comment type="subcellular location">
    <subcellularLocation>
        <location evidence="4">Secreted</location>
    </subcellularLocation>
</comment>
<comment type="similarity">
    <text evidence="4">Belongs to the FAM3 family.</text>
</comment>
<name>FAM3D_MOUSE</name>
<proteinExistence type="evidence at transcript level"/>
<organism>
    <name type="scientific">Mus musculus</name>
    <name type="common">Mouse</name>
    <dbReference type="NCBI Taxonomy" id="10090"/>
    <lineage>
        <taxon>Eukaryota</taxon>
        <taxon>Metazoa</taxon>
        <taxon>Chordata</taxon>
        <taxon>Craniata</taxon>
        <taxon>Vertebrata</taxon>
        <taxon>Euteleostomi</taxon>
        <taxon>Mammalia</taxon>
        <taxon>Eutheria</taxon>
        <taxon>Euarchontoglires</taxon>
        <taxon>Glires</taxon>
        <taxon>Rodentia</taxon>
        <taxon>Myomorpha</taxon>
        <taxon>Muroidea</taxon>
        <taxon>Muridae</taxon>
        <taxon>Murinae</taxon>
        <taxon>Mus</taxon>
        <taxon>Mus</taxon>
    </lineage>
</organism>
<sequence>MRVAGLIRVVVFIFTIVTMWVFLRSYTSFSRKTIRLPRWLGITPKDIQTPKSKCGLSKICPNNFFAFKISSGAANVVGPSMCFEDEIIMSPVRNNVGRGLNVALVNGSTGQVMKKDSFDMYSGDPQLLLNFLTEIPDSTLVLVASYDDPGTKMNDKIKTLFSNLGSSYAKQLGFRDSWVFVGAKDLKSKSPYEQFLKNNPETNKYDGWPELLELEGCVPRKVM</sequence>